<dbReference type="EMBL" id="AB006738">
    <property type="protein sequence ID" value="BAA21901.1"/>
    <property type="molecule type" value="Genomic_DNA"/>
</dbReference>
<dbReference type="EMBL" id="AL009126">
    <property type="protein sequence ID" value="CAB15381.1"/>
    <property type="molecule type" value="Genomic_DNA"/>
</dbReference>
<dbReference type="PIR" id="A70029">
    <property type="entry name" value="A70029"/>
</dbReference>
<dbReference type="RefSeq" id="NP_391256.1">
    <property type="nucleotide sequence ID" value="NC_000964.3"/>
</dbReference>
<dbReference type="RefSeq" id="WP_003228363.1">
    <property type="nucleotide sequence ID" value="NZ_OZ025638.1"/>
</dbReference>
<dbReference type="FunCoup" id="O34616">
    <property type="interactions" value="12"/>
</dbReference>
<dbReference type="STRING" id="224308.BSU33760"/>
<dbReference type="TCDB" id="9.A.31.1.1">
    <property type="family name" value="the putative sdpab peptide antibiotic-like killing factor exporter (sdpab) family"/>
</dbReference>
<dbReference type="PaxDb" id="224308-BSU33760"/>
<dbReference type="DNASU" id="936240"/>
<dbReference type="EnsemblBacteria" id="CAB15381">
    <property type="protein sequence ID" value="CAB15381"/>
    <property type="gene ID" value="BSU_33760"/>
</dbReference>
<dbReference type="GeneID" id="936240"/>
<dbReference type="KEGG" id="bsu:BSU33760"/>
<dbReference type="PATRIC" id="fig|224308.179.peg.3661"/>
<dbReference type="eggNOG" id="ENOG502ZGQB">
    <property type="taxonomic scope" value="Bacteria"/>
</dbReference>
<dbReference type="InParanoid" id="O34616"/>
<dbReference type="OrthoDB" id="128729at2"/>
<dbReference type="BioCyc" id="BSUB:BSU33760-MONOMER"/>
<dbReference type="Proteomes" id="UP000001570">
    <property type="component" value="Chromosome"/>
</dbReference>
<dbReference type="GO" id="GO:0005886">
    <property type="term" value="C:plasma membrane"/>
    <property type="evidence" value="ECO:0007669"/>
    <property type="project" value="UniProtKB-SubCell"/>
</dbReference>
<dbReference type="GO" id="GO:0030152">
    <property type="term" value="P:bacteriocin biosynthetic process"/>
    <property type="evidence" value="ECO:0007669"/>
    <property type="project" value="UniProtKB-KW"/>
</dbReference>
<dbReference type="InterPro" id="IPR011020">
    <property type="entry name" value="HTTM-like"/>
</dbReference>
<dbReference type="InterPro" id="IPR053934">
    <property type="entry name" value="HTTM_dom"/>
</dbReference>
<dbReference type="InterPro" id="IPR023894">
    <property type="entry name" value="Sporulation_SdpB"/>
</dbReference>
<dbReference type="InterPro" id="IPR052964">
    <property type="entry name" value="Sporulation_signal_mat"/>
</dbReference>
<dbReference type="NCBIfam" id="TIGR04033">
    <property type="entry name" value="export_SdpB"/>
    <property type="match status" value="1"/>
</dbReference>
<dbReference type="PANTHER" id="PTHR39535:SF2">
    <property type="entry name" value="HTTM DOMAIN-CONTAINING PROTEIN"/>
    <property type="match status" value="1"/>
</dbReference>
<dbReference type="PANTHER" id="PTHR39535">
    <property type="entry name" value="SPORULATION-DELAYING PROTEIN SDPB"/>
    <property type="match status" value="1"/>
</dbReference>
<dbReference type="Pfam" id="PF05090">
    <property type="entry name" value="HTTM"/>
    <property type="match status" value="1"/>
</dbReference>
<dbReference type="SMART" id="SM00752">
    <property type="entry name" value="HTTM"/>
    <property type="match status" value="1"/>
</dbReference>
<protein>
    <recommendedName>
        <fullName>Sporulation-delaying protein SdpB</fullName>
    </recommendedName>
</protein>
<evidence type="ECO:0000255" key="1"/>
<evidence type="ECO:0000269" key="2">
    <source>
    </source>
</evidence>
<evidence type="ECO:0000269" key="3">
    <source>
    </source>
</evidence>
<evidence type="ECO:0000269" key="4">
    <source>
    </source>
</evidence>
<evidence type="ECO:0000303" key="5">
    <source>
    </source>
</evidence>
<evidence type="ECO:0000305" key="6"/>
<organism>
    <name type="scientific">Bacillus subtilis (strain 168)</name>
    <dbReference type="NCBI Taxonomy" id="224308"/>
    <lineage>
        <taxon>Bacteria</taxon>
        <taxon>Bacillati</taxon>
        <taxon>Bacillota</taxon>
        <taxon>Bacilli</taxon>
        <taxon>Bacillales</taxon>
        <taxon>Bacillaceae</taxon>
        <taxon>Bacillus</taxon>
    </lineage>
</organism>
<comment type="function">
    <text evidence="2 4">Required for the maturation of SdpC to SDP (PubMed:12817086). Not required for SdpC signal peptide cleavage, secretion from the cell or disulfide bond formation (PubMed:23687264).</text>
</comment>
<comment type="subcellular location">
    <subcellularLocation>
        <location evidence="6">Cell membrane</location>
        <topology evidence="6">Multi-pass membrane protein</topology>
    </subcellularLocation>
</comment>
<comment type="induction">
    <text evidence="2 3">By Spo0A during nutrient starvation (PubMed:12817086). Repressed by AbrB during regular growth when nutrients are plentiful, in association with the transcriptional repressor Abh.</text>
</comment>
<comment type="disruption phenotype">
    <text evidence="2 4">When the sdpA-sdpB-sdpC operon is deleted, increased rate of spore formation; a double operon deletion (sdpA-sdpC plus skfA-skfH) makes spores even faster (PubMed:12817086). A single deletion mutant does not have SDP activity (active peptide of sdpC) (PubMed:23687264).</text>
</comment>
<accession>O34616</accession>
<reference key="1">
    <citation type="submission" date="1997-08" db="EMBL/GenBank/DDBJ databases">
        <authorList>
            <person name="Nakamura A."/>
            <person name="Grau R."/>
            <person name="Perego M."/>
            <person name="Hoch J.A."/>
        </authorList>
    </citation>
    <scope>NUCLEOTIDE SEQUENCE [GENOMIC DNA]</scope>
    <source>
        <strain>168 / JH642</strain>
    </source>
</reference>
<reference key="2">
    <citation type="journal article" date="1997" name="Nature">
        <title>The complete genome sequence of the Gram-positive bacterium Bacillus subtilis.</title>
        <authorList>
            <person name="Kunst F."/>
            <person name="Ogasawara N."/>
            <person name="Moszer I."/>
            <person name="Albertini A.M."/>
            <person name="Alloni G."/>
            <person name="Azevedo V."/>
            <person name="Bertero M.G."/>
            <person name="Bessieres P."/>
            <person name="Bolotin A."/>
            <person name="Borchert S."/>
            <person name="Borriss R."/>
            <person name="Boursier L."/>
            <person name="Brans A."/>
            <person name="Braun M."/>
            <person name="Brignell S.C."/>
            <person name="Bron S."/>
            <person name="Brouillet S."/>
            <person name="Bruschi C.V."/>
            <person name="Caldwell B."/>
            <person name="Capuano V."/>
            <person name="Carter N.M."/>
            <person name="Choi S.-K."/>
            <person name="Codani J.-J."/>
            <person name="Connerton I.F."/>
            <person name="Cummings N.J."/>
            <person name="Daniel R.A."/>
            <person name="Denizot F."/>
            <person name="Devine K.M."/>
            <person name="Duesterhoeft A."/>
            <person name="Ehrlich S.D."/>
            <person name="Emmerson P.T."/>
            <person name="Entian K.-D."/>
            <person name="Errington J."/>
            <person name="Fabret C."/>
            <person name="Ferrari E."/>
            <person name="Foulger D."/>
            <person name="Fritz C."/>
            <person name="Fujita M."/>
            <person name="Fujita Y."/>
            <person name="Fuma S."/>
            <person name="Galizzi A."/>
            <person name="Galleron N."/>
            <person name="Ghim S.-Y."/>
            <person name="Glaser P."/>
            <person name="Goffeau A."/>
            <person name="Golightly E.J."/>
            <person name="Grandi G."/>
            <person name="Guiseppi G."/>
            <person name="Guy B.J."/>
            <person name="Haga K."/>
            <person name="Haiech J."/>
            <person name="Harwood C.R."/>
            <person name="Henaut A."/>
            <person name="Hilbert H."/>
            <person name="Holsappel S."/>
            <person name="Hosono S."/>
            <person name="Hullo M.-F."/>
            <person name="Itaya M."/>
            <person name="Jones L.-M."/>
            <person name="Joris B."/>
            <person name="Karamata D."/>
            <person name="Kasahara Y."/>
            <person name="Klaerr-Blanchard M."/>
            <person name="Klein C."/>
            <person name="Kobayashi Y."/>
            <person name="Koetter P."/>
            <person name="Koningstein G."/>
            <person name="Krogh S."/>
            <person name="Kumano M."/>
            <person name="Kurita K."/>
            <person name="Lapidus A."/>
            <person name="Lardinois S."/>
            <person name="Lauber J."/>
            <person name="Lazarevic V."/>
            <person name="Lee S.-M."/>
            <person name="Levine A."/>
            <person name="Liu H."/>
            <person name="Masuda S."/>
            <person name="Mauel C."/>
            <person name="Medigue C."/>
            <person name="Medina N."/>
            <person name="Mellado R.P."/>
            <person name="Mizuno M."/>
            <person name="Moestl D."/>
            <person name="Nakai S."/>
            <person name="Noback M."/>
            <person name="Noone D."/>
            <person name="O'Reilly M."/>
            <person name="Ogawa K."/>
            <person name="Ogiwara A."/>
            <person name="Oudega B."/>
            <person name="Park S.-H."/>
            <person name="Parro V."/>
            <person name="Pohl T.M."/>
            <person name="Portetelle D."/>
            <person name="Porwollik S."/>
            <person name="Prescott A.M."/>
            <person name="Presecan E."/>
            <person name="Pujic P."/>
            <person name="Purnelle B."/>
            <person name="Rapoport G."/>
            <person name="Rey M."/>
            <person name="Reynolds S."/>
            <person name="Rieger M."/>
            <person name="Rivolta C."/>
            <person name="Rocha E."/>
            <person name="Roche B."/>
            <person name="Rose M."/>
            <person name="Sadaie Y."/>
            <person name="Sato T."/>
            <person name="Scanlan E."/>
            <person name="Schleich S."/>
            <person name="Schroeter R."/>
            <person name="Scoffone F."/>
            <person name="Sekiguchi J."/>
            <person name="Sekowska A."/>
            <person name="Seror S.J."/>
            <person name="Serror P."/>
            <person name="Shin B.-S."/>
            <person name="Soldo B."/>
            <person name="Sorokin A."/>
            <person name="Tacconi E."/>
            <person name="Takagi T."/>
            <person name="Takahashi H."/>
            <person name="Takemaru K."/>
            <person name="Takeuchi M."/>
            <person name="Tamakoshi A."/>
            <person name="Tanaka T."/>
            <person name="Terpstra P."/>
            <person name="Tognoni A."/>
            <person name="Tosato V."/>
            <person name="Uchiyama S."/>
            <person name="Vandenbol M."/>
            <person name="Vannier F."/>
            <person name="Vassarotti A."/>
            <person name="Viari A."/>
            <person name="Wambutt R."/>
            <person name="Wedler E."/>
            <person name="Wedler H."/>
            <person name="Weitzenegger T."/>
            <person name="Winters P."/>
            <person name="Wipat A."/>
            <person name="Yamamoto H."/>
            <person name="Yamane K."/>
            <person name="Yasumoto K."/>
            <person name="Yata K."/>
            <person name="Yoshida K."/>
            <person name="Yoshikawa H.-F."/>
            <person name="Zumstein E."/>
            <person name="Yoshikawa H."/>
            <person name="Danchin A."/>
        </authorList>
    </citation>
    <scope>NUCLEOTIDE SEQUENCE [LARGE SCALE GENOMIC DNA]</scope>
    <source>
        <strain>168</strain>
    </source>
</reference>
<reference key="3">
    <citation type="journal article" date="2003" name="Science">
        <title>Cannibalism by sporulating bacteria.</title>
        <authorList>
            <person name="Gonzalez-Pastor J.E."/>
            <person name="Hobbs E.C."/>
            <person name="Losick R."/>
        </authorList>
    </citation>
    <scope>REQUIRED FOR SDPC ACTIVITY</scope>
    <scope>INDUCTION</scope>
    <scope>DISRUPTION PHENOTYPE</scope>
    <source>
        <strain>168 / PY79</strain>
    </source>
</reference>
<reference key="4">
    <citation type="journal article" date="2007" name="J. Bacteriol.">
        <title>Abh and AbrB control of Bacillus subtilis antimicrobial gene expression.</title>
        <authorList>
            <person name="Strauch M.A."/>
            <person name="Bobay B.G."/>
            <person name="Cavanagh J."/>
            <person name="Yao F."/>
            <person name="Wilson A."/>
            <person name="Le Breton Y."/>
        </authorList>
    </citation>
    <scope>REPRESSION BY ABRB AND ABH</scope>
</reference>
<reference key="5">
    <citation type="journal article" date="2013" name="J. Bacteriol.">
        <title>Production of the cannibalism toxin SDP is a multistep process that requires SdpA and SdpB.</title>
        <authorList>
            <person name="Perez Morales T.G."/>
            <person name="Ho T.D."/>
            <person name="Liu W.T."/>
            <person name="Dorrestein P.C."/>
            <person name="Ellermeier C.D."/>
        </authorList>
    </citation>
    <scope>FUNCTION</scope>
    <scope>DISRUPTION PHENOTYPE</scope>
    <source>
        <strain>168 / PY79</strain>
    </source>
</reference>
<proteinExistence type="evidence at transcript level"/>
<name>SDPB_BACSU</name>
<gene>
    <name evidence="5" type="primary">sdpB</name>
    <name type="synonym">yvaX</name>
    <name type="ordered locus">BSU33760</name>
</gene>
<sequence length="323" mass="37450">MKILNSLEGYIDTYNPWKNTYALFRSLLGFSTLLVLLFNSTDILFSYSANNVTCENVYIPTAFCFAKEYSINFEIIRYLMIFILTLVVIGWRPRFTGLFHWYICYSIQTSALTIDGGEQIATVLSFLILPVTLLDSRRNHWNIKKNNNESFTKKTVLFYIMTIIKIQVFIIYLNAALERLKNKEWAEGTAIYYFFSDPVFGLPEYQLNLMNPLLESNFIVVITWLVTIFELFLAASIISNIRIKRIALVLGILFHIGIIFSIGIVSFGLIMISALIIYLHPVQQNITMNWCSPLFKYIYVKGKRNFKRIGGESVKFLTKLFHS</sequence>
<keyword id="KW-0045">Antibiotic biosynthesis</keyword>
<keyword id="KW-0871">Bacteriocin biosynthesis</keyword>
<keyword id="KW-1003">Cell membrane</keyword>
<keyword id="KW-0472">Membrane</keyword>
<keyword id="KW-1185">Reference proteome</keyword>
<keyword id="KW-0812">Transmembrane</keyword>
<keyword id="KW-1133">Transmembrane helix</keyword>
<feature type="chain" id="PRO_0000049937" description="Sporulation-delaying protein SdpB">
    <location>
        <begin position="1"/>
        <end position="323"/>
    </location>
</feature>
<feature type="transmembrane region" description="Helical" evidence="1">
    <location>
        <begin position="27"/>
        <end position="49"/>
    </location>
</feature>
<feature type="transmembrane region" description="Helical" evidence="1">
    <location>
        <begin position="70"/>
        <end position="92"/>
    </location>
</feature>
<feature type="transmembrane region" description="Helical" evidence="1">
    <location>
        <begin position="112"/>
        <end position="134"/>
    </location>
</feature>
<feature type="transmembrane region" description="Helical" evidence="1">
    <location>
        <begin position="155"/>
        <end position="177"/>
    </location>
</feature>
<feature type="transmembrane region" description="Helical" evidence="1">
    <location>
        <begin position="219"/>
        <end position="241"/>
    </location>
</feature>
<feature type="transmembrane region" description="Helical" evidence="1">
    <location>
        <begin position="248"/>
        <end position="270"/>
    </location>
</feature>